<protein>
    <recommendedName>
        <fullName evidence="6">Two-component response regulator ORR41</fullName>
    </recommendedName>
    <alternativeName>
        <fullName evidence="4">OsRRA14</fullName>
    </alternativeName>
</protein>
<organism>
    <name type="scientific">Oryza sativa subsp. japonica</name>
    <name type="common">Rice</name>
    <dbReference type="NCBI Taxonomy" id="39947"/>
    <lineage>
        <taxon>Eukaryota</taxon>
        <taxon>Viridiplantae</taxon>
        <taxon>Streptophyta</taxon>
        <taxon>Embryophyta</taxon>
        <taxon>Tracheophyta</taxon>
        <taxon>Spermatophyta</taxon>
        <taxon>Magnoliopsida</taxon>
        <taxon>Liliopsida</taxon>
        <taxon>Poales</taxon>
        <taxon>Poaceae</taxon>
        <taxon>BOP clade</taxon>
        <taxon>Oryzoideae</taxon>
        <taxon>Oryzeae</taxon>
        <taxon>Oryzinae</taxon>
        <taxon>Oryza</taxon>
        <taxon>Oryza sativa</taxon>
    </lineage>
</organism>
<keyword id="KW-0010">Activator</keyword>
<keyword id="KW-0932">Cytokinin signaling pathway</keyword>
<keyword id="KW-0597">Phosphoprotein</keyword>
<keyword id="KW-1185">Reference proteome</keyword>
<keyword id="KW-0902">Two-component regulatory system</keyword>
<dbReference type="EMBL" id="AC096855">
    <property type="protein sequence ID" value="AAR87285.1"/>
    <property type="molecule type" value="Genomic_DNA"/>
</dbReference>
<dbReference type="EMBL" id="DP000009">
    <property type="protein sequence ID" value="ABF98802.1"/>
    <property type="molecule type" value="Genomic_DNA"/>
</dbReference>
<dbReference type="EMBL" id="DP000009">
    <property type="protein sequence ID" value="ABF98803.1"/>
    <property type="molecule type" value="Genomic_DNA"/>
</dbReference>
<dbReference type="EMBL" id="AP008209">
    <property type="protein sequence ID" value="BAF13141.1"/>
    <property type="molecule type" value="Genomic_DNA"/>
</dbReference>
<dbReference type="EMBL" id="AP014959">
    <property type="protein sequence ID" value="BAS86317.1"/>
    <property type="molecule type" value="Genomic_DNA"/>
</dbReference>
<dbReference type="EMBL" id="CM000140">
    <property type="protein sequence ID" value="EAZ28539.1"/>
    <property type="molecule type" value="Genomic_DNA"/>
</dbReference>
<dbReference type="RefSeq" id="XP_015633131.1">
    <property type="nucleotide sequence ID" value="XM_015777645.1"/>
</dbReference>
<dbReference type="SMR" id="Q75KW7"/>
<dbReference type="FunCoup" id="Q75KW7">
    <property type="interactions" value="33"/>
</dbReference>
<dbReference type="STRING" id="39947.Q75KW7"/>
<dbReference type="PaxDb" id="39947-Q75KW7"/>
<dbReference type="EnsemblPlants" id="Os03t0742300-01">
    <property type="protein sequence ID" value="Os03t0742300-01"/>
    <property type="gene ID" value="Os03g0742300"/>
</dbReference>
<dbReference type="Gramene" id="Os03t0742300-01">
    <property type="protein sequence ID" value="Os03t0742300-01"/>
    <property type="gene ID" value="Os03g0742300"/>
</dbReference>
<dbReference type="KEGG" id="dosa:Os03g0742300"/>
<dbReference type="eggNOG" id="KOG0519">
    <property type="taxonomic scope" value="Eukaryota"/>
</dbReference>
<dbReference type="HOGENOM" id="CLU_000445_69_12_1"/>
<dbReference type="InParanoid" id="Q75KW7"/>
<dbReference type="OMA" id="NHILAKF"/>
<dbReference type="OrthoDB" id="21225at2759"/>
<dbReference type="Proteomes" id="UP000000763">
    <property type="component" value="Chromosome 3"/>
</dbReference>
<dbReference type="Proteomes" id="UP000007752">
    <property type="component" value="Chromosome 3"/>
</dbReference>
<dbReference type="Proteomes" id="UP000059680">
    <property type="component" value="Chromosome 3"/>
</dbReference>
<dbReference type="GO" id="GO:0009736">
    <property type="term" value="P:cytokinin-activated signaling pathway"/>
    <property type="evidence" value="ECO:0007669"/>
    <property type="project" value="UniProtKB-KW"/>
</dbReference>
<dbReference type="GO" id="GO:0000160">
    <property type="term" value="P:phosphorelay signal transduction system"/>
    <property type="evidence" value="ECO:0007669"/>
    <property type="project" value="UniProtKB-KW"/>
</dbReference>
<dbReference type="CDD" id="cd17546">
    <property type="entry name" value="REC_hyHK_CKI1_RcsC-like"/>
    <property type="match status" value="1"/>
</dbReference>
<dbReference type="Gene3D" id="3.40.50.2300">
    <property type="match status" value="1"/>
</dbReference>
<dbReference type="InterPro" id="IPR011006">
    <property type="entry name" value="CheY-like_superfamily"/>
</dbReference>
<dbReference type="InterPro" id="IPR001789">
    <property type="entry name" value="Sig_transdc_resp-reg_receiver"/>
</dbReference>
<dbReference type="InterPro" id="IPR052048">
    <property type="entry name" value="ST_Response_Regulator"/>
</dbReference>
<dbReference type="PANTHER" id="PTHR43228">
    <property type="entry name" value="TWO-COMPONENT RESPONSE REGULATOR"/>
    <property type="match status" value="1"/>
</dbReference>
<dbReference type="PANTHER" id="PTHR43228:SF1">
    <property type="entry name" value="TWO-COMPONENT RESPONSE REGULATOR ARR22"/>
    <property type="match status" value="1"/>
</dbReference>
<dbReference type="Pfam" id="PF00072">
    <property type="entry name" value="Response_reg"/>
    <property type="match status" value="1"/>
</dbReference>
<dbReference type="SMART" id="SM00448">
    <property type="entry name" value="REC"/>
    <property type="match status" value="1"/>
</dbReference>
<dbReference type="SUPFAM" id="SSF52172">
    <property type="entry name" value="CheY-like"/>
    <property type="match status" value="1"/>
</dbReference>
<dbReference type="PROSITE" id="PS50110">
    <property type="entry name" value="RESPONSE_REGULATORY"/>
    <property type="match status" value="1"/>
</dbReference>
<reference key="1">
    <citation type="journal article" date="2005" name="Genome Res.">
        <title>Sequence, annotation, and analysis of synteny between rice chromosome 3 and diverged grass species.</title>
        <authorList>
            <consortium name="The rice chromosome 3 sequencing consortium"/>
            <person name="Buell C.R."/>
            <person name="Yuan Q."/>
            <person name="Ouyang S."/>
            <person name="Liu J."/>
            <person name="Zhu W."/>
            <person name="Wang A."/>
            <person name="Maiti R."/>
            <person name="Haas B."/>
            <person name="Wortman J."/>
            <person name="Pertea M."/>
            <person name="Jones K.M."/>
            <person name="Kim M."/>
            <person name="Overton L."/>
            <person name="Tsitrin T."/>
            <person name="Fadrosh D."/>
            <person name="Bera J."/>
            <person name="Weaver B."/>
            <person name="Jin S."/>
            <person name="Johri S."/>
            <person name="Reardon M."/>
            <person name="Webb K."/>
            <person name="Hill J."/>
            <person name="Moffat K."/>
            <person name="Tallon L."/>
            <person name="Van Aken S."/>
            <person name="Lewis M."/>
            <person name="Utterback T."/>
            <person name="Feldblyum T."/>
            <person name="Zismann V."/>
            <person name="Iobst S."/>
            <person name="Hsiao J."/>
            <person name="de Vazeille A.R."/>
            <person name="Salzberg S.L."/>
            <person name="White O."/>
            <person name="Fraser C.M."/>
            <person name="Yu Y."/>
            <person name="Kim H."/>
            <person name="Rambo T."/>
            <person name="Currie J."/>
            <person name="Collura K."/>
            <person name="Kernodle-Thompson S."/>
            <person name="Wei F."/>
            <person name="Kudrna K."/>
            <person name="Ammiraju J.S.S."/>
            <person name="Luo M."/>
            <person name="Goicoechea J.L."/>
            <person name="Wing R.A."/>
            <person name="Henry D."/>
            <person name="Oates R."/>
            <person name="Palmer M."/>
            <person name="Pries G."/>
            <person name="Saski C."/>
            <person name="Simmons J."/>
            <person name="Soderlund C."/>
            <person name="Nelson W."/>
            <person name="de la Bastide M."/>
            <person name="Spiegel L."/>
            <person name="Nascimento L."/>
            <person name="Huang E."/>
            <person name="Preston R."/>
            <person name="Zutavern T."/>
            <person name="Palmer L."/>
            <person name="O'Shaughnessy A."/>
            <person name="Dike S."/>
            <person name="McCombie W.R."/>
            <person name="Minx P."/>
            <person name="Cordum H."/>
            <person name="Wilson R."/>
            <person name="Jin W."/>
            <person name="Lee H.R."/>
            <person name="Jiang J."/>
            <person name="Jackson S."/>
        </authorList>
    </citation>
    <scope>NUCLEOTIDE SEQUENCE [LARGE SCALE GENOMIC DNA]</scope>
    <source>
        <strain>cv. Nipponbare</strain>
    </source>
</reference>
<reference key="2">
    <citation type="journal article" date="2005" name="Nature">
        <title>The map-based sequence of the rice genome.</title>
        <authorList>
            <consortium name="International rice genome sequencing project (IRGSP)"/>
        </authorList>
    </citation>
    <scope>NUCLEOTIDE SEQUENCE [LARGE SCALE GENOMIC DNA]</scope>
    <source>
        <strain>cv. Nipponbare</strain>
    </source>
</reference>
<reference key="3">
    <citation type="journal article" date="2008" name="Nucleic Acids Res.">
        <title>The rice annotation project database (RAP-DB): 2008 update.</title>
        <authorList>
            <consortium name="The rice annotation project (RAP)"/>
        </authorList>
    </citation>
    <scope>GENOME REANNOTATION</scope>
    <source>
        <strain>cv. Nipponbare</strain>
    </source>
</reference>
<reference key="4">
    <citation type="journal article" date="2013" name="Rice">
        <title>Improvement of the Oryza sativa Nipponbare reference genome using next generation sequence and optical map data.</title>
        <authorList>
            <person name="Kawahara Y."/>
            <person name="de la Bastide M."/>
            <person name="Hamilton J.P."/>
            <person name="Kanamori H."/>
            <person name="McCombie W.R."/>
            <person name="Ouyang S."/>
            <person name="Schwartz D.C."/>
            <person name="Tanaka T."/>
            <person name="Wu J."/>
            <person name="Zhou S."/>
            <person name="Childs K.L."/>
            <person name="Davidson R.M."/>
            <person name="Lin H."/>
            <person name="Quesada-Ocampo L."/>
            <person name="Vaillancourt B."/>
            <person name="Sakai H."/>
            <person name="Lee S.S."/>
            <person name="Kim J."/>
            <person name="Numa H."/>
            <person name="Itoh T."/>
            <person name="Buell C.R."/>
            <person name="Matsumoto T."/>
        </authorList>
    </citation>
    <scope>GENOME REANNOTATION</scope>
    <source>
        <strain>cv. Nipponbare</strain>
    </source>
</reference>
<reference key="5">
    <citation type="journal article" date="2005" name="PLoS Biol.">
        <title>The genomes of Oryza sativa: a history of duplications.</title>
        <authorList>
            <person name="Yu J."/>
            <person name="Wang J."/>
            <person name="Lin W."/>
            <person name="Li S."/>
            <person name="Li H."/>
            <person name="Zhou J."/>
            <person name="Ni P."/>
            <person name="Dong W."/>
            <person name="Hu S."/>
            <person name="Zeng C."/>
            <person name="Zhang J."/>
            <person name="Zhang Y."/>
            <person name="Li R."/>
            <person name="Xu Z."/>
            <person name="Li S."/>
            <person name="Li X."/>
            <person name="Zheng H."/>
            <person name="Cong L."/>
            <person name="Lin L."/>
            <person name="Yin J."/>
            <person name="Geng J."/>
            <person name="Li G."/>
            <person name="Shi J."/>
            <person name="Liu J."/>
            <person name="Lv H."/>
            <person name="Li J."/>
            <person name="Wang J."/>
            <person name="Deng Y."/>
            <person name="Ran L."/>
            <person name="Shi X."/>
            <person name="Wang X."/>
            <person name="Wu Q."/>
            <person name="Li C."/>
            <person name="Ren X."/>
            <person name="Wang J."/>
            <person name="Wang X."/>
            <person name="Li D."/>
            <person name="Liu D."/>
            <person name="Zhang X."/>
            <person name="Ji Z."/>
            <person name="Zhao W."/>
            <person name="Sun Y."/>
            <person name="Zhang Z."/>
            <person name="Bao J."/>
            <person name="Han Y."/>
            <person name="Dong L."/>
            <person name="Ji J."/>
            <person name="Chen P."/>
            <person name="Wu S."/>
            <person name="Liu J."/>
            <person name="Xiao Y."/>
            <person name="Bu D."/>
            <person name="Tan J."/>
            <person name="Yang L."/>
            <person name="Ye C."/>
            <person name="Zhang J."/>
            <person name="Xu J."/>
            <person name="Zhou Y."/>
            <person name="Yu Y."/>
            <person name="Zhang B."/>
            <person name="Zhuang S."/>
            <person name="Wei H."/>
            <person name="Liu B."/>
            <person name="Lei M."/>
            <person name="Yu H."/>
            <person name="Li Y."/>
            <person name="Xu H."/>
            <person name="Wei S."/>
            <person name="He X."/>
            <person name="Fang L."/>
            <person name="Zhang Z."/>
            <person name="Zhang Y."/>
            <person name="Huang X."/>
            <person name="Su Z."/>
            <person name="Tong W."/>
            <person name="Li J."/>
            <person name="Tong Z."/>
            <person name="Li S."/>
            <person name="Ye J."/>
            <person name="Wang L."/>
            <person name="Fang L."/>
            <person name="Lei T."/>
            <person name="Chen C.-S."/>
            <person name="Chen H.-C."/>
            <person name="Xu Z."/>
            <person name="Li H."/>
            <person name="Huang H."/>
            <person name="Zhang F."/>
            <person name="Xu H."/>
            <person name="Li N."/>
            <person name="Zhao C."/>
            <person name="Li S."/>
            <person name="Dong L."/>
            <person name="Huang Y."/>
            <person name="Li L."/>
            <person name="Xi Y."/>
            <person name="Qi Q."/>
            <person name="Li W."/>
            <person name="Zhang B."/>
            <person name="Hu W."/>
            <person name="Zhang Y."/>
            <person name="Tian X."/>
            <person name="Jiao Y."/>
            <person name="Liang X."/>
            <person name="Jin J."/>
            <person name="Gao L."/>
            <person name="Zheng W."/>
            <person name="Hao B."/>
            <person name="Liu S.-M."/>
            <person name="Wang W."/>
            <person name="Yuan L."/>
            <person name="Cao M."/>
            <person name="McDermott J."/>
            <person name="Samudrala R."/>
            <person name="Wang J."/>
            <person name="Wong G.K.-S."/>
            <person name="Yang H."/>
        </authorList>
    </citation>
    <scope>NUCLEOTIDE SEQUENCE [LARGE SCALE GENOMIC DNA]</scope>
    <source>
        <strain>cv. Nipponbare</strain>
    </source>
</reference>
<reference key="6">
    <citation type="journal article" date="2006" name="Plant Physiol.">
        <title>Whole-genome analysis of Oryza sativa reveals similar architecture of two-component signaling machinery with Arabidopsis.</title>
        <authorList>
            <person name="Pareek A."/>
            <person name="Singh A."/>
            <person name="Kumar M."/>
            <person name="Kushwaha H.R."/>
            <person name="Lynn A.M."/>
            <person name="Singla-Pareek S.L."/>
        </authorList>
    </citation>
    <scope>DISRUPTION PHENOTYPE</scope>
</reference>
<reference key="7">
    <citation type="journal article" date="2007" name="Plant Physiol.">
        <title>Nomenclature for two-component signaling elements of rice.</title>
        <authorList>
            <person name="Schaller G.E."/>
            <person name="Doi K."/>
            <person name="Hwang I."/>
            <person name="Kieber J.J."/>
            <person name="Khurana J.P."/>
            <person name="Kurata N."/>
            <person name="Mizuno T."/>
            <person name="Pareek A."/>
            <person name="Shiu S.H."/>
            <person name="Wu P."/>
            <person name="Yip W.K."/>
        </authorList>
    </citation>
    <scope>GENE FAMILY</scope>
    <scope>NOMENCLATURE</scope>
</reference>
<feature type="chain" id="PRO_0000433859" description="Two-component response regulator ORR41">
    <location>
        <begin position="1"/>
        <end position="127"/>
    </location>
</feature>
<feature type="domain" description="Response regulatory" evidence="2">
    <location>
        <begin position="7"/>
        <end position="125"/>
    </location>
</feature>
<feature type="modified residue" description="4-aspartylphosphate" evidence="2">
    <location>
        <position position="60"/>
    </location>
</feature>
<comment type="function">
    <text evidence="1">Functions as a response regulator involved in His-to-Asp phosphorelay signal transduction system. Phosphorylation of the Asp residue in the receiver domain activates the ability of the protein to promote the transcription of target genes. May directly activate some type-A response regulators in response to cytokinins.</text>
</comment>
<comment type="PTM">
    <text evidence="6">Two-component system major event consists of a His-to-Asp phosphorelay between a sensor histidine kinase (HK) and a response regulator (RR). In plants, the His-to-Asp phosphorelay involves an additional intermediate named Histidine-containing phosphotransfer protein (HPt). This multistep phosphorelay consists of a His-Asp-His-Asp sequential transfer of a phosphate group between first a His and an Asp of the HK protein, followed by the transfer to a conserved His of the HPt protein and finally the transfer to an Asp in the receiver domain of the RR protein.</text>
</comment>
<comment type="disruption phenotype">
    <text evidence="3">Dwarf, narrow leaf and low tillering phenotypes.</text>
</comment>
<comment type="similarity">
    <text evidence="6">Belongs to the ARR family. Type-C subfamily.</text>
</comment>
<gene>
    <name evidence="5" type="primary">RR41</name>
    <name evidence="9" type="ordered locus">Os03g0742300</name>
    <name evidence="8" type="ordered locus">LOC_Os03g53100</name>
    <name evidence="7" type="ORF">OJ1365_D05.10</name>
    <name evidence="10" type="ORF">OsJ_12520</name>
</gene>
<name>ORR41_ORYSJ</name>
<proteinExistence type="inferred from homology"/>
<accession>Q75KW7</accession>
<accession>A0A0P0W2V1</accession>
<evidence type="ECO:0000250" key="1">
    <source>
        <dbReference type="UniProtKB" id="Q940D0"/>
    </source>
</evidence>
<evidence type="ECO:0000255" key="2">
    <source>
        <dbReference type="PROSITE-ProRule" id="PRU00169"/>
    </source>
</evidence>
<evidence type="ECO:0000269" key="3">
    <source>
    </source>
</evidence>
<evidence type="ECO:0000303" key="4">
    <source>
    </source>
</evidence>
<evidence type="ECO:0000303" key="5">
    <source>
    </source>
</evidence>
<evidence type="ECO:0000305" key="6"/>
<evidence type="ECO:0000312" key="7">
    <source>
        <dbReference type="EMBL" id="AAR87285.1"/>
    </source>
</evidence>
<evidence type="ECO:0000312" key="8">
    <source>
        <dbReference type="EMBL" id="ABF98802.1"/>
    </source>
</evidence>
<evidence type="ECO:0000312" key="9">
    <source>
        <dbReference type="EMBL" id="BAF13141.1"/>
    </source>
</evidence>
<evidence type="ECO:0000312" key="10">
    <source>
        <dbReference type="EMBL" id="EAZ28539.1"/>
    </source>
</evidence>
<sequence length="127" mass="13562">MARKMIRVLLVEDEEINRVVARAALKAAGGGDVVDEAENGEVAVQRVRDAAAPYDLVLMDKQMPVMDGHEATRRIRGMGVTTPIVAVSSDGLPADVDAFITAGADDFTSKPLSKEKLGVILAKFRLA</sequence>